<evidence type="ECO:0000255" key="1">
    <source>
        <dbReference type="HAMAP-Rule" id="MF_01569"/>
    </source>
</evidence>
<proteinExistence type="inferred from homology"/>
<organism>
    <name type="scientific">Salmonella newport (strain SL254)</name>
    <dbReference type="NCBI Taxonomy" id="423368"/>
    <lineage>
        <taxon>Bacteria</taxon>
        <taxon>Pseudomonadati</taxon>
        <taxon>Pseudomonadota</taxon>
        <taxon>Gammaproteobacteria</taxon>
        <taxon>Enterobacterales</taxon>
        <taxon>Enterobacteriaceae</taxon>
        <taxon>Salmonella</taxon>
    </lineage>
</organism>
<dbReference type="EC" id="6.1.1.15" evidence="1"/>
<dbReference type="EMBL" id="CP001113">
    <property type="protein sequence ID" value="ACF61955.1"/>
    <property type="molecule type" value="Genomic_DNA"/>
</dbReference>
<dbReference type="RefSeq" id="WP_001260687.1">
    <property type="nucleotide sequence ID" value="NZ_CCMR01000003.1"/>
</dbReference>
<dbReference type="SMR" id="B4SV24"/>
<dbReference type="KEGG" id="see:SNSL254_A0264"/>
<dbReference type="HOGENOM" id="CLU_016739_0_0_6"/>
<dbReference type="Proteomes" id="UP000008824">
    <property type="component" value="Chromosome"/>
</dbReference>
<dbReference type="GO" id="GO:0005829">
    <property type="term" value="C:cytosol"/>
    <property type="evidence" value="ECO:0007669"/>
    <property type="project" value="TreeGrafter"/>
</dbReference>
<dbReference type="GO" id="GO:0002161">
    <property type="term" value="F:aminoacyl-tRNA deacylase activity"/>
    <property type="evidence" value="ECO:0007669"/>
    <property type="project" value="InterPro"/>
</dbReference>
<dbReference type="GO" id="GO:0005524">
    <property type="term" value="F:ATP binding"/>
    <property type="evidence" value="ECO:0007669"/>
    <property type="project" value="UniProtKB-UniRule"/>
</dbReference>
<dbReference type="GO" id="GO:0004827">
    <property type="term" value="F:proline-tRNA ligase activity"/>
    <property type="evidence" value="ECO:0007669"/>
    <property type="project" value="UniProtKB-UniRule"/>
</dbReference>
<dbReference type="GO" id="GO:0006433">
    <property type="term" value="P:prolyl-tRNA aminoacylation"/>
    <property type="evidence" value="ECO:0007669"/>
    <property type="project" value="UniProtKB-UniRule"/>
</dbReference>
<dbReference type="CDD" id="cd04334">
    <property type="entry name" value="ProRS-INS"/>
    <property type="match status" value="1"/>
</dbReference>
<dbReference type="CDD" id="cd00861">
    <property type="entry name" value="ProRS_anticodon_short"/>
    <property type="match status" value="1"/>
</dbReference>
<dbReference type="CDD" id="cd00779">
    <property type="entry name" value="ProRS_core_prok"/>
    <property type="match status" value="1"/>
</dbReference>
<dbReference type="FunFam" id="3.30.930.10:FF:000012">
    <property type="entry name" value="Proline--tRNA ligase"/>
    <property type="match status" value="1"/>
</dbReference>
<dbReference type="FunFam" id="3.30.930.10:FF:000097">
    <property type="entry name" value="Proline--tRNA ligase"/>
    <property type="match status" value="1"/>
</dbReference>
<dbReference type="FunFam" id="3.40.50.800:FF:000006">
    <property type="entry name" value="Proline--tRNA ligase"/>
    <property type="match status" value="1"/>
</dbReference>
<dbReference type="FunFam" id="3.90.960.10:FF:000001">
    <property type="entry name" value="Proline--tRNA ligase"/>
    <property type="match status" value="1"/>
</dbReference>
<dbReference type="Gene3D" id="3.40.50.800">
    <property type="entry name" value="Anticodon-binding domain"/>
    <property type="match status" value="1"/>
</dbReference>
<dbReference type="Gene3D" id="3.30.930.10">
    <property type="entry name" value="Bira Bifunctional Protein, Domain 2"/>
    <property type="match status" value="2"/>
</dbReference>
<dbReference type="Gene3D" id="3.90.960.10">
    <property type="entry name" value="YbaK/aminoacyl-tRNA synthetase-associated domain"/>
    <property type="match status" value="1"/>
</dbReference>
<dbReference type="HAMAP" id="MF_01569">
    <property type="entry name" value="Pro_tRNA_synth_type1"/>
    <property type="match status" value="1"/>
</dbReference>
<dbReference type="InterPro" id="IPR002314">
    <property type="entry name" value="aa-tRNA-synt_IIb"/>
</dbReference>
<dbReference type="InterPro" id="IPR006195">
    <property type="entry name" value="aa-tRNA-synth_II"/>
</dbReference>
<dbReference type="InterPro" id="IPR045864">
    <property type="entry name" value="aa-tRNA-synth_II/BPL/LPL"/>
</dbReference>
<dbReference type="InterPro" id="IPR004154">
    <property type="entry name" value="Anticodon-bd"/>
</dbReference>
<dbReference type="InterPro" id="IPR036621">
    <property type="entry name" value="Anticodon-bd_dom_sf"/>
</dbReference>
<dbReference type="InterPro" id="IPR002316">
    <property type="entry name" value="Pro-tRNA-ligase_IIa"/>
</dbReference>
<dbReference type="InterPro" id="IPR004500">
    <property type="entry name" value="Pro-tRNA-synth_IIa_bac-type"/>
</dbReference>
<dbReference type="InterPro" id="IPR023717">
    <property type="entry name" value="Pro-tRNA-Synthase_IIa_type1"/>
</dbReference>
<dbReference type="InterPro" id="IPR050062">
    <property type="entry name" value="Pro-tRNA_synthetase"/>
</dbReference>
<dbReference type="InterPro" id="IPR044140">
    <property type="entry name" value="ProRS_anticodon_short"/>
</dbReference>
<dbReference type="InterPro" id="IPR033730">
    <property type="entry name" value="ProRS_core_prok"/>
</dbReference>
<dbReference type="InterPro" id="IPR036754">
    <property type="entry name" value="YbaK/aa-tRNA-synt-asso_dom_sf"/>
</dbReference>
<dbReference type="InterPro" id="IPR007214">
    <property type="entry name" value="YbaK/aa-tRNA-synth-assoc-dom"/>
</dbReference>
<dbReference type="NCBIfam" id="NF006625">
    <property type="entry name" value="PRK09194.1"/>
    <property type="match status" value="1"/>
</dbReference>
<dbReference type="NCBIfam" id="TIGR00409">
    <property type="entry name" value="proS_fam_II"/>
    <property type="match status" value="1"/>
</dbReference>
<dbReference type="PANTHER" id="PTHR42753">
    <property type="entry name" value="MITOCHONDRIAL RIBOSOME PROTEIN L39/PROLYL-TRNA LIGASE FAMILY MEMBER"/>
    <property type="match status" value="1"/>
</dbReference>
<dbReference type="PANTHER" id="PTHR42753:SF2">
    <property type="entry name" value="PROLINE--TRNA LIGASE"/>
    <property type="match status" value="1"/>
</dbReference>
<dbReference type="Pfam" id="PF03129">
    <property type="entry name" value="HGTP_anticodon"/>
    <property type="match status" value="1"/>
</dbReference>
<dbReference type="Pfam" id="PF00587">
    <property type="entry name" value="tRNA-synt_2b"/>
    <property type="match status" value="1"/>
</dbReference>
<dbReference type="Pfam" id="PF04073">
    <property type="entry name" value="tRNA_edit"/>
    <property type="match status" value="1"/>
</dbReference>
<dbReference type="PIRSF" id="PIRSF001535">
    <property type="entry name" value="ProRS_1"/>
    <property type="match status" value="1"/>
</dbReference>
<dbReference type="PRINTS" id="PR01046">
    <property type="entry name" value="TRNASYNTHPRO"/>
</dbReference>
<dbReference type="SUPFAM" id="SSF52954">
    <property type="entry name" value="Class II aaRS ABD-related"/>
    <property type="match status" value="1"/>
</dbReference>
<dbReference type="SUPFAM" id="SSF55681">
    <property type="entry name" value="Class II aaRS and biotin synthetases"/>
    <property type="match status" value="1"/>
</dbReference>
<dbReference type="SUPFAM" id="SSF55826">
    <property type="entry name" value="YbaK/ProRS associated domain"/>
    <property type="match status" value="1"/>
</dbReference>
<dbReference type="PROSITE" id="PS50862">
    <property type="entry name" value="AA_TRNA_LIGASE_II"/>
    <property type="match status" value="1"/>
</dbReference>
<protein>
    <recommendedName>
        <fullName evidence="1">Proline--tRNA ligase</fullName>
        <ecNumber evidence="1">6.1.1.15</ecNumber>
    </recommendedName>
    <alternativeName>
        <fullName evidence="1">Prolyl-tRNA synthetase</fullName>
        <shortName evidence="1">ProRS</shortName>
    </alternativeName>
</protein>
<accession>B4SV24</accession>
<name>SYP_SALNS</name>
<sequence>MRTSQYLLSTLKETPADAEVISHQLMLRAGMIRKLASGLYTWLPTGLRVLKKVENIVREEMNNAGAIEVSMPVVQPADLWQESGRWEQYGPELLRFVDRGERPFVLGPTHEEVITDLVRNELSSYKQLPLNFFQIQTKFRDEVRPRFGVMRSREFLMKDAYSFHTSQESLQETYDAMYAAYSRIFSRMGLDFRAVQADTGSIGGNASHEFQVLAQSGEDDIVFSDVSDYAANIELAEAIAPQTPRAAATQEMTLVDTPNAKTIAELVEQFNLPIEKTVKTLLVKAVKDSKSPLVALLVRGDHELNEVKAEKLPQVASPLTFATEEEIRAVINAGPGSLGPVNMPIPVIIDRTVAAMSDFAAGANIDGKHYFGINWDRDVATPVVADIRNVVAGDPSPDGQGTLLIKRGIEVGHIFQLGTKYSEALKASVQGEDGRNQILTMGCYGIGVTRVVAAAIEQNFDERGIVWPDAIAPFQVAILPMNMHKSFRVQELAEKLYSELRAQGIEVLMDDRKERPGVMFADMELIGIPHTIVIGDRNLDNDDIEYKYRRSGEKSLIKTGDIVDYLVKAIKG</sequence>
<gene>
    <name evidence="1" type="primary">proS</name>
    <name type="ordered locus">SNSL254_A0264</name>
</gene>
<feature type="chain" id="PRO_1000199419" description="Proline--tRNA ligase">
    <location>
        <begin position="1"/>
        <end position="572"/>
    </location>
</feature>
<keyword id="KW-0030">Aminoacyl-tRNA synthetase</keyword>
<keyword id="KW-0067">ATP-binding</keyword>
<keyword id="KW-0963">Cytoplasm</keyword>
<keyword id="KW-0436">Ligase</keyword>
<keyword id="KW-0547">Nucleotide-binding</keyword>
<keyword id="KW-0648">Protein biosynthesis</keyword>
<reference key="1">
    <citation type="journal article" date="2011" name="J. Bacteriol.">
        <title>Comparative genomics of 28 Salmonella enterica isolates: evidence for CRISPR-mediated adaptive sublineage evolution.</title>
        <authorList>
            <person name="Fricke W.F."/>
            <person name="Mammel M.K."/>
            <person name="McDermott P.F."/>
            <person name="Tartera C."/>
            <person name="White D.G."/>
            <person name="Leclerc J.E."/>
            <person name="Ravel J."/>
            <person name="Cebula T.A."/>
        </authorList>
    </citation>
    <scope>NUCLEOTIDE SEQUENCE [LARGE SCALE GENOMIC DNA]</scope>
    <source>
        <strain>SL254</strain>
    </source>
</reference>
<comment type="function">
    <text evidence="1">Catalyzes the attachment of proline to tRNA(Pro) in a two-step reaction: proline is first activated by ATP to form Pro-AMP and then transferred to the acceptor end of tRNA(Pro). As ProRS can inadvertently accommodate and process non-cognate amino acids such as alanine and cysteine, to avoid such errors it has two additional distinct editing activities against alanine. One activity is designated as 'pretransfer' editing and involves the tRNA(Pro)-independent hydrolysis of activated Ala-AMP. The other activity is designated 'posttransfer' editing and involves deacylation of mischarged Ala-tRNA(Pro). The misacylated Cys-tRNA(Pro) is not edited by ProRS.</text>
</comment>
<comment type="catalytic activity">
    <reaction evidence="1">
        <text>tRNA(Pro) + L-proline + ATP = L-prolyl-tRNA(Pro) + AMP + diphosphate</text>
        <dbReference type="Rhea" id="RHEA:14305"/>
        <dbReference type="Rhea" id="RHEA-COMP:9700"/>
        <dbReference type="Rhea" id="RHEA-COMP:9702"/>
        <dbReference type="ChEBI" id="CHEBI:30616"/>
        <dbReference type="ChEBI" id="CHEBI:33019"/>
        <dbReference type="ChEBI" id="CHEBI:60039"/>
        <dbReference type="ChEBI" id="CHEBI:78442"/>
        <dbReference type="ChEBI" id="CHEBI:78532"/>
        <dbReference type="ChEBI" id="CHEBI:456215"/>
        <dbReference type="EC" id="6.1.1.15"/>
    </reaction>
</comment>
<comment type="subunit">
    <text evidence="1">Homodimer.</text>
</comment>
<comment type="subcellular location">
    <subcellularLocation>
        <location evidence="1">Cytoplasm</location>
    </subcellularLocation>
</comment>
<comment type="domain">
    <text evidence="1">Consists of three domains: the N-terminal catalytic domain, the editing domain and the C-terminal anticodon-binding domain.</text>
</comment>
<comment type="similarity">
    <text evidence="1">Belongs to the class-II aminoacyl-tRNA synthetase family. ProS type 1 subfamily.</text>
</comment>